<gene>
    <name evidence="3" type="primary">LINC02915</name>
    <name type="synonym">C15orf54</name>
</gene>
<reference key="1">
    <citation type="journal article" date="2004" name="Nat. Genet.">
        <title>Complete sequencing and characterization of 21,243 full-length human cDNAs.</title>
        <authorList>
            <person name="Ota T."/>
            <person name="Suzuki Y."/>
            <person name="Nishikawa T."/>
            <person name="Otsuki T."/>
            <person name="Sugiyama T."/>
            <person name="Irie R."/>
            <person name="Wakamatsu A."/>
            <person name="Hayashi K."/>
            <person name="Sato H."/>
            <person name="Nagai K."/>
            <person name="Kimura K."/>
            <person name="Makita H."/>
            <person name="Sekine M."/>
            <person name="Obayashi M."/>
            <person name="Nishi T."/>
            <person name="Shibahara T."/>
            <person name="Tanaka T."/>
            <person name="Ishii S."/>
            <person name="Yamamoto J."/>
            <person name="Saito K."/>
            <person name="Kawai Y."/>
            <person name="Isono Y."/>
            <person name="Nakamura Y."/>
            <person name="Nagahari K."/>
            <person name="Murakami K."/>
            <person name="Yasuda T."/>
            <person name="Iwayanagi T."/>
            <person name="Wagatsuma M."/>
            <person name="Shiratori A."/>
            <person name="Sudo H."/>
            <person name="Hosoiri T."/>
            <person name="Kaku Y."/>
            <person name="Kodaira H."/>
            <person name="Kondo H."/>
            <person name="Sugawara M."/>
            <person name="Takahashi M."/>
            <person name="Kanda K."/>
            <person name="Yokoi T."/>
            <person name="Furuya T."/>
            <person name="Kikkawa E."/>
            <person name="Omura Y."/>
            <person name="Abe K."/>
            <person name="Kamihara K."/>
            <person name="Katsuta N."/>
            <person name="Sato K."/>
            <person name="Tanikawa M."/>
            <person name="Yamazaki M."/>
            <person name="Ninomiya K."/>
            <person name="Ishibashi T."/>
            <person name="Yamashita H."/>
            <person name="Murakawa K."/>
            <person name="Fujimori K."/>
            <person name="Tanai H."/>
            <person name="Kimata M."/>
            <person name="Watanabe M."/>
            <person name="Hiraoka S."/>
            <person name="Chiba Y."/>
            <person name="Ishida S."/>
            <person name="Ono Y."/>
            <person name="Takiguchi S."/>
            <person name="Watanabe S."/>
            <person name="Yosida M."/>
            <person name="Hotuta T."/>
            <person name="Kusano J."/>
            <person name="Kanehori K."/>
            <person name="Takahashi-Fujii A."/>
            <person name="Hara H."/>
            <person name="Tanase T.-O."/>
            <person name="Nomura Y."/>
            <person name="Togiya S."/>
            <person name="Komai F."/>
            <person name="Hara R."/>
            <person name="Takeuchi K."/>
            <person name="Arita M."/>
            <person name="Imose N."/>
            <person name="Musashino K."/>
            <person name="Yuuki H."/>
            <person name="Oshima A."/>
            <person name="Sasaki N."/>
            <person name="Aotsuka S."/>
            <person name="Yoshikawa Y."/>
            <person name="Matsunawa H."/>
            <person name="Ichihara T."/>
            <person name="Shiohata N."/>
            <person name="Sano S."/>
            <person name="Moriya S."/>
            <person name="Momiyama H."/>
            <person name="Satoh N."/>
            <person name="Takami S."/>
            <person name="Terashima Y."/>
            <person name="Suzuki O."/>
            <person name="Nakagawa S."/>
            <person name="Senoh A."/>
            <person name="Mizoguchi H."/>
            <person name="Goto Y."/>
            <person name="Shimizu F."/>
            <person name="Wakebe H."/>
            <person name="Hishigaki H."/>
            <person name="Watanabe T."/>
            <person name="Sugiyama A."/>
            <person name="Takemoto M."/>
            <person name="Kawakami B."/>
            <person name="Yamazaki M."/>
            <person name="Watanabe K."/>
            <person name="Kumagai A."/>
            <person name="Itakura S."/>
            <person name="Fukuzumi Y."/>
            <person name="Fujimori Y."/>
            <person name="Komiyama M."/>
            <person name="Tashiro H."/>
            <person name="Tanigami A."/>
            <person name="Fujiwara T."/>
            <person name="Ono T."/>
            <person name="Yamada K."/>
            <person name="Fujii Y."/>
            <person name="Ozaki K."/>
            <person name="Hirao M."/>
            <person name="Ohmori Y."/>
            <person name="Kawabata A."/>
            <person name="Hikiji T."/>
            <person name="Kobatake N."/>
            <person name="Inagaki H."/>
            <person name="Ikema Y."/>
            <person name="Okamoto S."/>
            <person name="Okitani R."/>
            <person name="Kawakami T."/>
            <person name="Noguchi S."/>
            <person name="Itoh T."/>
            <person name="Shigeta K."/>
            <person name="Senba T."/>
            <person name="Matsumura K."/>
            <person name="Nakajima Y."/>
            <person name="Mizuno T."/>
            <person name="Morinaga M."/>
            <person name="Sasaki M."/>
            <person name="Togashi T."/>
            <person name="Oyama M."/>
            <person name="Hata H."/>
            <person name="Watanabe M."/>
            <person name="Komatsu T."/>
            <person name="Mizushima-Sugano J."/>
            <person name="Satoh T."/>
            <person name="Shirai Y."/>
            <person name="Takahashi Y."/>
            <person name="Nakagawa K."/>
            <person name="Okumura K."/>
            <person name="Nagase T."/>
            <person name="Nomura N."/>
            <person name="Kikuchi H."/>
            <person name="Masuho Y."/>
            <person name="Yamashita R."/>
            <person name="Nakai K."/>
            <person name="Yada T."/>
            <person name="Nakamura Y."/>
            <person name="Ohara O."/>
            <person name="Isogai T."/>
            <person name="Sugano S."/>
        </authorList>
    </citation>
    <scope>NUCLEOTIDE SEQUENCE [LARGE SCALE MRNA]</scope>
    <source>
        <tissue>Endothelial cell</tissue>
    </source>
</reference>
<reference key="2">
    <citation type="journal article" date="2004" name="Genome Res.">
        <title>The status, quality, and expansion of the NIH full-length cDNA project: the Mammalian Gene Collection (MGC).</title>
        <authorList>
            <consortium name="The MGC Project Team"/>
        </authorList>
    </citation>
    <scope>NUCLEOTIDE SEQUENCE [LARGE SCALE MRNA]</scope>
    <scope>VARIANT MET-59</scope>
</reference>
<dbReference type="EMBL" id="AK096850">
    <property type="protein sequence ID" value="BAC04876.1"/>
    <property type="molecule type" value="mRNA"/>
</dbReference>
<dbReference type="EMBL" id="BC137300">
    <property type="protein sequence ID" value="AAI37301.1"/>
    <property type="molecule type" value="mRNA"/>
</dbReference>
<dbReference type="EMBL" id="BC137301">
    <property type="protein sequence ID" value="AAI37302.1"/>
    <property type="molecule type" value="mRNA"/>
</dbReference>
<dbReference type="EMBL" id="BC171789">
    <property type="protein sequence ID" value="AAI71789.1"/>
    <property type="molecule type" value="mRNA"/>
</dbReference>
<dbReference type="SMR" id="Q8N8G6"/>
<dbReference type="BioGRID" id="134578">
    <property type="interactions" value="5"/>
</dbReference>
<dbReference type="FunCoup" id="Q8N8G6">
    <property type="interactions" value="21"/>
</dbReference>
<dbReference type="IntAct" id="Q8N8G6">
    <property type="interactions" value="2"/>
</dbReference>
<dbReference type="iPTMnet" id="Q8N8G6"/>
<dbReference type="PhosphoSitePlus" id="Q8N8G6"/>
<dbReference type="BioMuta" id="HGNC:33797"/>
<dbReference type="DMDM" id="74729442"/>
<dbReference type="PaxDb" id="9606-ENSP00000323686"/>
<dbReference type="PeptideAtlas" id="Q8N8G6"/>
<dbReference type="ProteomicsDB" id="72422"/>
<dbReference type="AGR" id="HGNC:33797"/>
<dbReference type="GeneCards" id="LINC02915"/>
<dbReference type="HGNC" id="HGNC:33797">
    <property type="gene designation" value="LINC02915"/>
</dbReference>
<dbReference type="neXtProt" id="NX_Q8N8G6"/>
<dbReference type="eggNOG" id="ENOG502TDWC">
    <property type="taxonomic scope" value="Eukaryota"/>
</dbReference>
<dbReference type="InParanoid" id="Q8N8G6"/>
<dbReference type="PAN-GO" id="Q8N8G6">
    <property type="GO annotations" value="0 GO annotations based on evolutionary models"/>
</dbReference>
<dbReference type="PathwayCommons" id="Q8N8G6"/>
<dbReference type="SignaLink" id="Q8N8G6"/>
<dbReference type="Pharos" id="Q8N8G6">
    <property type="development level" value="Tdark"/>
</dbReference>
<dbReference type="PRO" id="PR:Q8N8G6"/>
<dbReference type="Proteomes" id="UP000005640">
    <property type="component" value="Unplaced"/>
</dbReference>
<dbReference type="RNAct" id="Q8N8G6">
    <property type="molecule type" value="protein"/>
</dbReference>
<evidence type="ECO:0000269" key="1">
    <source>
    </source>
</evidence>
<evidence type="ECO:0000305" key="2"/>
<evidence type="ECO:0000312" key="3">
    <source>
        <dbReference type="HGNC" id="HGNC:33797"/>
    </source>
</evidence>
<protein>
    <recommendedName>
        <fullName evidence="2">Putative uncharacterized protein encoded by LINC02915</fullName>
    </recommendedName>
</protein>
<name>CO054_HUMAN</name>
<sequence>MEVKFITGKHGGRRPQRAEPQRICRALWLTPWPSLILKLLSWIILSNLFLHLRATHHMTELPLRFLYIALSEMTFREQTSHQIIQQMSLSNKLEQNQLYGEVINKETDNPVISSGLTLLFAQKPQSPGWKNMSSTKRVCTILADSCRAQAHAADRGERGHFGVQILHHFIEVFNVMAVRSNPF</sequence>
<feature type="chain" id="PRO_0000342459" description="Putative uncharacterized protein encoded by LINC02915">
    <location>
        <begin position="1"/>
        <end position="183"/>
    </location>
</feature>
<feature type="sequence variant" id="VAR_044189" description="In dbSNP:rs11853050." evidence="1">
    <original>T</original>
    <variation>M</variation>
    <location>
        <position position="59"/>
    </location>
</feature>
<feature type="sequence variant" id="VAR_044190" description="In dbSNP:rs16968547.">
    <original>E</original>
    <variation>K</variation>
    <location>
        <position position="77"/>
    </location>
</feature>
<keyword id="KW-1185">Reference proteome</keyword>
<organism>
    <name type="scientific">Homo sapiens</name>
    <name type="common">Human</name>
    <dbReference type="NCBI Taxonomy" id="9606"/>
    <lineage>
        <taxon>Eukaryota</taxon>
        <taxon>Metazoa</taxon>
        <taxon>Chordata</taxon>
        <taxon>Craniata</taxon>
        <taxon>Vertebrata</taxon>
        <taxon>Euteleostomi</taxon>
        <taxon>Mammalia</taxon>
        <taxon>Eutheria</taxon>
        <taxon>Euarchontoglires</taxon>
        <taxon>Primates</taxon>
        <taxon>Haplorrhini</taxon>
        <taxon>Catarrhini</taxon>
        <taxon>Hominidae</taxon>
        <taxon>Homo</taxon>
    </lineage>
</organism>
<accession>Q8N8G6</accession>
<accession>B7ZVZ9</accession>
<proteinExistence type="evidence at transcript level"/>